<accession>Q1CB23</accession>
<sequence>MSEQKPQVAEQAQELNSELQARREKLAVLRGKGIAFPNDFRRENLSDQLHAEFDSKENEELEALNIDVTVAGRMMTRRIMGKASFVTLQDVGGRIQLYVSRDDLPEGVYNEEFKKWDLGDILGARGKLFKTKTGELSIHCSELRLLTKALRPLPDKFHGLADQETRYRQRYLDLIANDESRHTFKVRSQVMSGIRSFMVEKGFMEVETPMMQVIPGGASARPFVTHHNALDIDMYLRIAPELYLKRLVVGGFERVFEINRNFRNEGVSPRHNPEFTMMELYMAYADYKDLIVLTEELFRTLTETILGSSVVQYGEQTFDFGKPFAKLTMKEAICKYRPETNVADLDDMDKAVAIAESLGIKVEKSWGLGRIQCEIFEETAESHLIQPTFITEYPAEVSPLARRNDDNPFITDRFEFFIGGREIGNGFSELNDAEDQAQRFADQVSAKEAGDDEAMFYDEDYITALEHGLPPTAGLGIGIDRMVMLFTNSHTIRDVILFPAMRPVK</sequence>
<feature type="chain" id="PRO_1000012967" description="Lysine--tRNA ligase">
    <location>
        <begin position="1"/>
        <end position="505"/>
    </location>
</feature>
<feature type="binding site" evidence="1">
    <location>
        <position position="415"/>
    </location>
    <ligand>
        <name>Mg(2+)</name>
        <dbReference type="ChEBI" id="CHEBI:18420"/>
        <label>1</label>
    </ligand>
</feature>
<feature type="binding site" evidence="1">
    <location>
        <position position="422"/>
    </location>
    <ligand>
        <name>Mg(2+)</name>
        <dbReference type="ChEBI" id="CHEBI:18420"/>
        <label>1</label>
    </ligand>
</feature>
<feature type="binding site" evidence="1">
    <location>
        <position position="422"/>
    </location>
    <ligand>
        <name>Mg(2+)</name>
        <dbReference type="ChEBI" id="CHEBI:18420"/>
        <label>2</label>
    </ligand>
</feature>
<evidence type="ECO:0000255" key="1">
    <source>
        <dbReference type="HAMAP-Rule" id="MF_00252"/>
    </source>
</evidence>
<organism>
    <name type="scientific">Yersinia pestis bv. Antiqua (strain Antiqua)</name>
    <dbReference type="NCBI Taxonomy" id="360102"/>
    <lineage>
        <taxon>Bacteria</taxon>
        <taxon>Pseudomonadati</taxon>
        <taxon>Pseudomonadota</taxon>
        <taxon>Gammaproteobacteria</taxon>
        <taxon>Enterobacterales</taxon>
        <taxon>Yersiniaceae</taxon>
        <taxon>Yersinia</taxon>
    </lineage>
</organism>
<dbReference type="EC" id="6.1.1.6" evidence="1"/>
<dbReference type="EMBL" id="CP000308">
    <property type="protein sequence ID" value="ABG12349.1"/>
    <property type="molecule type" value="Genomic_DNA"/>
</dbReference>
<dbReference type="RefSeq" id="WP_002209930.1">
    <property type="nucleotide sequence ID" value="NZ_CP009906.1"/>
</dbReference>
<dbReference type="SMR" id="Q1CB23"/>
<dbReference type="GeneID" id="57973752"/>
<dbReference type="KEGG" id="ypa:YPA_0381"/>
<dbReference type="Proteomes" id="UP000001971">
    <property type="component" value="Chromosome"/>
</dbReference>
<dbReference type="GO" id="GO:0005829">
    <property type="term" value="C:cytosol"/>
    <property type="evidence" value="ECO:0007669"/>
    <property type="project" value="TreeGrafter"/>
</dbReference>
<dbReference type="GO" id="GO:0005524">
    <property type="term" value="F:ATP binding"/>
    <property type="evidence" value="ECO:0007669"/>
    <property type="project" value="UniProtKB-UniRule"/>
</dbReference>
<dbReference type="GO" id="GO:0004824">
    <property type="term" value="F:lysine-tRNA ligase activity"/>
    <property type="evidence" value="ECO:0007669"/>
    <property type="project" value="UniProtKB-UniRule"/>
</dbReference>
<dbReference type="GO" id="GO:0000287">
    <property type="term" value="F:magnesium ion binding"/>
    <property type="evidence" value="ECO:0007669"/>
    <property type="project" value="UniProtKB-UniRule"/>
</dbReference>
<dbReference type="GO" id="GO:0000049">
    <property type="term" value="F:tRNA binding"/>
    <property type="evidence" value="ECO:0007669"/>
    <property type="project" value="TreeGrafter"/>
</dbReference>
<dbReference type="GO" id="GO:0006430">
    <property type="term" value="P:lysyl-tRNA aminoacylation"/>
    <property type="evidence" value="ECO:0007669"/>
    <property type="project" value="UniProtKB-UniRule"/>
</dbReference>
<dbReference type="CDD" id="cd00775">
    <property type="entry name" value="LysRS_core"/>
    <property type="match status" value="1"/>
</dbReference>
<dbReference type="CDD" id="cd04322">
    <property type="entry name" value="LysRS_N"/>
    <property type="match status" value="1"/>
</dbReference>
<dbReference type="FunFam" id="2.40.50.140:FF:000024">
    <property type="entry name" value="Lysine--tRNA ligase"/>
    <property type="match status" value="1"/>
</dbReference>
<dbReference type="FunFam" id="3.30.930.10:FF:000001">
    <property type="entry name" value="Lysine--tRNA ligase"/>
    <property type="match status" value="1"/>
</dbReference>
<dbReference type="Gene3D" id="3.30.930.10">
    <property type="entry name" value="Bira Bifunctional Protein, Domain 2"/>
    <property type="match status" value="1"/>
</dbReference>
<dbReference type="Gene3D" id="2.40.50.140">
    <property type="entry name" value="Nucleic acid-binding proteins"/>
    <property type="match status" value="1"/>
</dbReference>
<dbReference type="HAMAP" id="MF_00252">
    <property type="entry name" value="Lys_tRNA_synth_class2"/>
    <property type="match status" value="1"/>
</dbReference>
<dbReference type="InterPro" id="IPR004364">
    <property type="entry name" value="Aa-tRNA-synt_II"/>
</dbReference>
<dbReference type="InterPro" id="IPR006195">
    <property type="entry name" value="aa-tRNA-synth_II"/>
</dbReference>
<dbReference type="InterPro" id="IPR045864">
    <property type="entry name" value="aa-tRNA-synth_II/BPL/LPL"/>
</dbReference>
<dbReference type="InterPro" id="IPR002313">
    <property type="entry name" value="Lys-tRNA-ligase_II"/>
</dbReference>
<dbReference type="InterPro" id="IPR034762">
    <property type="entry name" value="Lys-tRNA-ligase_II_bac/euk"/>
</dbReference>
<dbReference type="InterPro" id="IPR044136">
    <property type="entry name" value="Lys-tRNA-ligase_II_N"/>
</dbReference>
<dbReference type="InterPro" id="IPR018149">
    <property type="entry name" value="Lys-tRNA-synth_II_C"/>
</dbReference>
<dbReference type="InterPro" id="IPR012340">
    <property type="entry name" value="NA-bd_OB-fold"/>
</dbReference>
<dbReference type="InterPro" id="IPR004365">
    <property type="entry name" value="NA-bd_OB_tRNA"/>
</dbReference>
<dbReference type="NCBIfam" id="TIGR00499">
    <property type="entry name" value="lysS_bact"/>
    <property type="match status" value="1"/>
</dbReference>
<dbReference type="NCBIfam" id="NF001756">
    <property type="entry name" value="PRK00484.1"/>
    <property type="match status" value="1"/>
</dbReference>
<dbReference type="PANTHER" id="PTHR42918:SF15">
    <property type="entry name" value="LYSINE--TRNA LIGASE, CHLOROPLASTIC_MITOCHONDRIAL"/>
    <property type="match status" value="1"/>
</dbReference>
<dbReference type="PANTHER" id="PTHR42918">
    <property type="entry name" value="LYSYL-TRNA SYNTHETASE"/>
    <property type="match status" value="1"/>
</dbReference>
<dbReference type="Pfam" id="PF00152">
    <property type="entry name" value="tRNA-synt_2"/>
    <property type="match status" value="1"/>
</dbReference>
<dbReference type="Pfam" id="PF01336">
    <property type="entry name" value="tRNA_anti-codon"/>
    <property type="match status" value="1"/>
</dbReference>
<dbReference type="PIRSF" id="PIRSF039101">
    <property type="entry name" value="LysRS2"/>
    <property type="match status" value="1"/>
</dbReference>
<dbReference type="PRINTS" id="PR00982">
    <property type="entry name" value="TRNASYNTHLYS"/>
</dbReference>
<dbReference type="SUPFAM" id="SSF55681">
    <property type="entry name" value="Class II aaRS and biotin synthetases"/>
    <property type="match status" value="1"/>
</dbReference>
<dbReference type="SUPFAM" id="SSF50249">
    <property type="entry name" value="Nucleic acid-binding proteins"/>
    <property type="match status" value="1"/>
</dbReference>
<dbReference type="PROSITE" id="PS50862">
    <property type="entry name" value="AA_TRNA_LIGASE_II"/>
    <property type="match status" value="1"/>
</dbReference>
<proteinExistence type="inferred from homology"/>
<name>SYK_YERPA</name>
<comment type="catalytic activity">
    <reaction evidence="1">
        <text>tRNA(Lys) + L-lysine + ATP = L-lysyl-tRNA(Lys) + AMP + diphosphate</text>
        <dbReference type="Rhea" id="RHEA:20792"/>
        <dbReference type="Rhea" id="RHEA-COMP:9696"/>
        <dbReference type="Rhea" id="RHEA-COMP:9697"/>
        <dbReference type="ChEBI" id="CHEBI:30616"/>
        <dbReference type="ChEBI" id="CHEBI:32551"/>
        <dbReference type="ChEBI" id="CHEBI:33019"/>
        <dbReference type="ChEBI" id="CHEBI:78442"/>
        <dbReference type="ChEBI" id="CHEBI:78529"/>
        <dbReference type="ChEBI" id="CHEBI:456215"/>
        <dbReference type="EC" id="6.1.1.6"/>
    </reaction>
</comment>
<comment type="cofactor">
    <cofactor evidence="1">
        <name>Mg(2+)</name>
        <dbReference type="ChEBI" id="CHEBI:18420"/>
    </cofactor>
    <text evidence="1">Binds 3 Mg(2+) ions per subunit.</text>
</comment>
<comment type="subunit">
    <text evidence="1">Homodimer.</text>
</comment>
<comment type="subcellular location">
    <subcellularLocation>
        <location evidence="1">Cytoplasm</location>
    </subcellularLocation>
</comment>
<comment type="similarity">
    <text evidence="1">Belongs to the class-II aminoacyl-tRNA synthetase family.</text>
</comment>
<protein>
    <recommendedName>
        <fullName evidence="1">Lysine--tRNA ligase</fullName>
        <ecNumber evidence="1">6.1.1.6</ecNumber>
    </recommendedName>
    <alternativeName>
        <fullName evidence="1">Lysyl-tRNA synthetase</fullName>
        <shortName evidence="1">LysRS</shortName>
    </alternativeName>
</protein>
<keyword id="KW-0030">Aminoacyl-tRNA synthetase</keyword>
<keyword id="KW-0067">ATP-binding</keyword>
<keyword id="KW-0963">Cytoplasm</keyword>
<keyword id="KW-0436">Ligase</keyword>
<keyword id="KW-0460">Magnesium</keyword>
<keyword id="KW-0479">Metal-binding</keyword>
<keyword id="KW-0547">Nucleotide-binding</keyword>
<keyword id="KW-0648">Protein biosynthesis</keyword>
<reference key="1">
    <citation type="journal article" date="2006" name="J. Bacteriol.">
        <title>Complete genome sequence of Yersinia pestis strains Antiqua and Nepal516: evidence of gene reduction in an emerging pathogen.</title>
        <authorList>
            <person name="Chain P.S.G."/>
            <person name="Hu P."/>
            <person name="Malfatti S.A."/>
            <person name="Radnedge L."/>
            <person name="Larimer F."/>
            <person name="Vergez L.M."/>
            <person name="Worsham P."/>
            <person name="Chu M.C."/>
            <person name="Andersen G.L."/>
        </authorList>
    </citation>
    <scope>NUCLEOTIDE SEQUENCE [LARGE SCALE GENOMIC DNA]</scope>
    <source>
        <strain>Antiqua</strain>
    </source>
</reference>
<gene>
    <name evidence="1" type="primary">lysS</name>
    <name type="ordered locus">YPA_0381</name>
</gene>